<proteinExistence type="evidence at transcript level"/>
<keyword id="KW-0007">Acetylation</keyword>
<keyword id="KW-1017">Isopeptide bond</keyword>
<keyword id="KW-0597">Phosphoprotein</keyword>
<keyword id="KW-0646">Protease inhibitor</keyword>
<keyword id="KW-0677">Repeat</keyword>
<keyword id="KW-0789">Thiol protease inhibitor</keyword>
<keyword id="KW-0832">Ubl conjugation</keyword>
<comment type="function">
    <text>Specific inhibition of calpain (calcium-dependent cysteine protease). Plays a key role in postmortem tenderization of meat and have been proposed to be involved in muscle protein degradation in living tissue.</text>
</comment>
<comment type="domain">
    <text evidence="1">Each of the four flexible inhibitory domains can inhibit one calcium-bound calpain molecule by occupying both sides of the active site.</text>
</comment>
<comment type="similarity">
    <text evidence="6">Belongs to the protease inhibitor I27 (calpastatin) family.</text>
</comment>
<sequence length="283" mass="30170">MNPTETKAIPVSQQMEGPHLPNKKKHKKQAVKTEPEKKSQSTKLSVVHEKKSQEGKPKEHTEQKSLPKPASDTGSKDAHNKKAVSRSAEQQPSEKSTEPKTEPQDMVSAGGESVAGVAATSGKPGDKKKEKKSLTPAVPVESKPDKPSGKSGMDAALDDLIDTLGGPEEIEEENTTYTGPEVSDPMSSTYIEELGKREVTIPPKYRELLAKNEGITGPPADSSKPVGPDDAIDALSSDFTCGSPTAAGKKTEKEESTEVLKAQSAGTVRSAAPPQEKKRKVEK</sequence>
<organism>
    <name type="scientific">Chlorocebus aethiops</name>
    <name type="common">Green monkey</name>
    <name type="synonym">Cercopithecus aethiops</name>
    <dbReference type="NCBI Taxonomy" id="9534"/>
    <lineage>
        <taxon>Eukaryota</taxon>
        <taxon>Metazoa</taxon>
        <taxon>Chordata</taxon>
        <taxon>Craniata</taxon>
        <taxon>Vertebrata</taxon>
        <taxon>Euteleostomi</taxon>
        <taxon>Mammalia</taxon>
        <taxon>Eutheria</taxon>
        <taxon>Euarchontoglires</taxon>
        <taxon>Primates</taxon>
        <taxon>Haplorrhini</taxon>
        <taxon>Catarrhini</taxon>
        <taxon>Cercopithecidae</taxon>
        <taxon>Cercopithecinae</taxon>
        <taxon>Chlorocebus</taxon>
    </lineage>
</organism>
<dbReference type="EMBL" id="M86248">
    <property type="protein sequence ID" value="AAA52753.1"/>
    <property type="molecule type" value="mRNA"/>
</dbReference>
<dbReference type="BMRB" id="P49342"/>
<dbReference type="IntAct" id="P49342">
    <property type="interactions" value="1"/>
</dbReference>
<dbReference type="GO" id="GO:0005737">
    <property type="term" value="C:cytoplasm"/>
    <property type="evidence" value="ECO:0007669"/>
    <property type="project" value="TreeGrafter"/>
</dbReference>
<dbReference type="GO" id="GO:0010859">
    <property type="term" value="F:calcium-dependent cysteine-type endopeptidase inhibitor activity"/>
    <property type="evidence" value="ECO:0007669"/>
    <property type="project" value="TreeGrafter"/>
</dbReference>
<dbReference type="InterPro" id="IPR026998">
    <property type="entry name" value="Calpastatin"/>
</dbReference>
<dbReference type="InterPro" id="IPR001259">
    <property type="entry name" value="Prot_inh_calpain"/>
</dbReference>
<dbReference type="PANTHER" id="PTHR10077">
    <property type="entry name" value="CALPASTATIN"/>
    <property type="match status" value="1"/>
</dbReference>
<dbReference type="PANTHER" id="PTHR10077:SF0">
    <property type="entry name" value="CALPASTATIN"/>
    <property type="match status" value="1"/>
</dbReference>
<dbReference type="Pfam" id="PF00748">
    <property type="entry name" value="Calpain_inhib"/>
    <property type="match status" value="2"/>
</dbReference>
<name>ICAL_CHLAE</name>
<accession>P49342</accession>
<protein>
    <recommendedName>
        <fullName>Calpastatin</fullName>
    </recommendedName>
    <alternativeName>
        <fullName>Calpain inhibitor</fullName>
    </alternativeName>
</protein>
<evidence type="ECO:0000250" key="1"/>
<evidence type="ECO:0000250" key="2">
    <source>
        <dbReference type="UniProtKB" id="P20810"/>
    </source>
</evidence>
<evidence type="ECO:0000250" key="3">
    <source>
        <dbReference type="UniProtKB" id="P27321"/>
    </source>
</evidence>
<evidence type="ECO:0000250" key="4">
    <source>
        <dbReference type="UniProtKB" id="P51125"/>
    </source>
</evidence>
<evidence type="ECO:0000256" key="5">
    <source>
        <dbReference type="SAM" id="MobiDB-lite"/>
    </source>
</evidence>
<evidence type="ECO:0000305" key="6"/>
<reference key="1">
    <citation type="journal article" date="1992" name="J. Biol. Chem.">
        <title>Molecular diversity in amino-terminal domains of human calpastatin by exon skipping.</title>
        <authorList>
            <person name="Lee W.J."/>
            <person name="Ma H."/>
            <person name="Takano E."/>
            <person name="Yang H.Q."/>
            <person name="Hatanaka M."/>
            <person name="Maki M."/>
        </authorList>
    </citation>
    <scope>NUCLEOTIDE SEQUENCE [MRNA]</scope>
</reference>
<feature type="chain" id="PRO_0000147631" description="Calpastatin">
    <location>
        <begin position="1"/>
        <end position="283" status="greater than"/>
    </location>
</feature>
<feature type="repeat" description="Inhibitory domain 1">
    <location>
        <begin position="170"/>
        <end position="222"/>
    </location>
</feature>
<feature type="region of interest" description="Disordered" evidence="5">
    <location>
        <begin position="1"/>
        <end position="186"/>
    </location>
</feature>
<feature type="region of interest" description="Disordered" evidence="5">
    <location>
        <begin position="212"/>
        <end position="283"/>
    </location>
</feature>
<feature type="compositionally biased region" description="Polar residues" evidence="5">
    <location>
        <begin position="1"/>
        <end position="15"/>
    </location>
</feature>
<feature type="compositionally biased region" description="Basic residues" evidence="5">
    <location>
        <begin position="21"/>
        <end position="30"/>
    </location>
</feature>
<feature type="compositionally biased region" description="Basic and acidic residues" evidence="5">
    <location>
        <begin position="46"/>
        <end position="65"/>
    </location>
</feature>
<feature type="compositionally biased region" description="Low complexity" evidence="5">
    <location>
        <begin position="107"/>
        <end position="122"/>
    </location>
</feature>
<feature type="compositionally biased region" description="Basic and acidic residues" evidence="5">
    <location>
        <begin position="249"/>
        <end position="258"/>
    </location>
</feature>
<feature type="modified residue" description="N6-acetyllysine" evidence="4">
    <location>
        <position position="50"/>
    </location>
</feature>
<feature type="modified residue" description="Phosphoserine" evidence="4">
    <location>
        <position position="87"/>
    </location>
</feature>
<feature type="modified residue" description="Phosphoserine" evidence="2">
    <location>
        <position position="133"/>
    </location>
</feature>
<feature type="modified residue" description="Phosphothreonine" evidence="3">
    <location>
        <position position="135"/>
    </location>
</feature>
<feature type="modified residue" description="Phosphoserine" evidence="4">
    <location>
        <position position="222"/>
    </location>
</feature>
<feature type="modified residue" description="Phosphoserine" evidence="2">
    <location>
        <position position="243"/>
    </location>
</feature>
<feature type="cross-link" description="Glycyl lysine isopeptide (Lys-Gly) (interchain with G-Cter in SUMO2)" evidence="2">
    <location>
        <position position="32"/>
    </location>
</feature>
<feature type="non-terminal residue">
    <location>
        <position position="283"/>
    </location>
</feature>
<gene>
    <name type="primary">CAST</name>
</gene>